<accession>B1H1E4</accession>
<proteinExistence type="evidence at transcript level"/>
<name>ARI1_XENTR</name>
<organism>
    <name type="scientific">Xenopus tropicalis</name>
    <name type="common">Western clawed frog</name>
    <name type="synonym">Silurana tropicalis</name>
    <dbReference type="NCBI Taxonomy" id="8364"/>
    <lineage>
        <taxon>Eukaryota</taxon>
        <taxon>Metazoa</taxon>
        <taxon>Chordata</taxon>
        <taxon>Craniata</taxon>
        <taxon>Vertebrata</taxon>
        <taxon>Euteleostomi</taxon>
        <taxon>Amphibia</taxon>
        <taxon>Batrachia</taxon>
        <taxon>Anura</taxon>
        <taxon>Pipoidea</taxon>
        <taxon>Pipidae</taxon>
        <taxon>Xenopodinae</taxon>
        <taxon>Xenopus</taxon>
        <taxon>Silurana</taxon>
    </lineage>
</organism>
<protein>
    <recommendedName>
        <fullName>E3 ubiquitin-protein ligase arih1</fullName>
        <ecNumber evidence="1">2.3.2.31</ecNumber>
    </recommendedName>
    <alternativeName>
        <fullName>Protein ariadne-1 homolog</fullName>
        <shortName>ARI-1</shortName>
    </alternativeName>
</protein>
<keyword id="KW-0963">Cytoplasm</keyword>
<keyword id="KW-0479">Metal-binding</keyword>
<keyword id="KW-0539">Nucleus</keyword>
<keyword id="KW-1185">Reference proteome</keyword>
<keyword id="KW-0677">Repeat</keyword>
<keyword id="KW-0808">Transferase</keyword>
<keyword id="KW-0833">Ubl conjugation pathway</keyword>
<keyword id="KW-0862">Zinc</keyword>
<keyword id="KW-0863">Zinc-finger</keyword>
<dbReference type="EC" id="2.3.2.31" evidence="1"/>
<dbReference type="EMBL" id="BC160576">
    <property type="protein sequence ID" value="AAI60576.1"/>
    <property type="molecule type" value="mRNA"/>
</dbReference>
<dbReference type="RefSeq" id="NP_001116952.1">
    <property type="nucleotide sequence ID" value="NM_001123480.1"/>
</dbReference>
<dbReference type="RefSeq" id="XP_012821490.1">
    <property type="nucleotide sequence ID" value="XM_012966036.1"/>
</dbReference>
<dbReference type="RefSeq" id="XP_012821491.1">
    <property type="nucleotide sequence ID" value="XM_012966037.2"/>
</dbReference>
<dbReference type="RefSeq" id="XP_012821492.1">
    <property type="nucleotide sequence ID" value="XM_012966038.2"/>
</dbReference>
<dbReference type="RefSeq" id="XP_017947420.1">
    <property type="nucleotide sequence ID" value="XM_018091931.1"/>
</dbReference>
<dbReference type="BMRB" id="B1H1E4"/>
<dbReference type="SMR" id="B1H1E4"/>
<dbReference type="FunCoup" id="B1H1E4">
    <property type="interactions" value="4365"/>
</dbReference>
<dbReference type="STRING" id="8364.ENSXETP00000053083"/>
<dbReference type="PaxDb" id="8364-ENSXETP00000058410"/>
<dbReference type="GeneID" id="100144731"/>
<dbReference type="KEGG" id="xtr:100144731"/>
<dbReference type="AGR" id="Xenbase:XB-GENE-972160"/>
<dbReference type="CTD" id="25820"/>
<dbReference type="Xenbase" id="XB-GENE-972160">
    <property type="gene designation" value="arih1"/>
</dbReference>
<dbReference type="eggNOG" id="KOG1815">
    <property type="taxonomic scope" value="Eukaryota"/>
</dbReference>
<dbReference type="HOGENOM" id="CLU_009823_4_2_1"/>
<dbReference type="InParanoid" id="B1H1E4"/>
<dbReference type="OMA" id="HRFCMIC"/>
<dbReference type="OrthoDB" id="10009520at2759"/>
<dbReference type="PhylomeDB" id="B1H1E4"/>
<dbReference type="TreeFam" id="TF300805"/>
<dbReference type="Reactome" id="R-XTR-1169408">
    <property type="pathway name" value="ISG15 antiviral mechanism"/>
</dbReference>
<dbReference type="UniPathway" id="UPA00143"/>
<dbReference type="Proteomes" id="UP000008143">
    <property type="component" value="Chromosome 3"/>
</dbReference>
<dbReference type="Bgee" id="ENSXETG00000032729">
    <property type="expression patterns" value="Expressed in testis and 12 other cell types or tissues"/>
</dbReference>
<dbReference type="GO" id="GO:0005737">
    <property type="term" value="C:cytoplasm"/>
    <property type="evidence" value="ECO:0000250"/>
    <property type="project" value="UniProtKB"/>
</dbReference>
<dbReference type="GO" id="GO:0097413">
    <property type="term" value="C:Lewy body"/>
    <property type="evidence" value="ECO:0000250"/>
    <property type="project" value="UniProtKB"/>
</dbReference>
<dbReference type="GO" id="GO:0016604">
    <property type="term" value="C:nuclear body"/>
    <property type="evidence" value="ECO:0000250"/>
    <property type="project" value="UniProtKB"/>
</dbReference>
<dbReference type="GO" id="GO:0004842">
    <property type="term" value="F:ubiquitin-protein transferase activity"/>
    <property type="evidence" value="ECO:0000250"/>
    <property type="project" value="UniProtKB"/>
</dbReference>
<dbReference type="GO" id="GO:0008270">
    <property type="term" value="F:zinc ion binding"/>
    <property type="evidence" value="ECO:0000250"/>
    <property type="project" value="UniProtKB"/>
</dbReference>
<dbReference type="GO" id="GO:0016567">
    <property type="term" value="P:protein ubiquitination"/>
    <property type="evidence" value="ECO:0000250"/>
    <property type="project" value="UniProtKB"/>
</dbReference>
<dbReference type="CDD" id="cd20343">
    <property type="entry name" value="BRcat_RBR_HHARI-like"/>
    <property type="match status" value="1"/>
</dbReference>
<dbReference type="CDD" id="cd20356">
    <property type="entry name" value="Rcat_RBR_HHARI-like"/>
    <property type="match status" value="1"/>
</dbReference>
<dbReference type="CDD" id="cd16626">
    <property type="entry name" value="RING-HC_RBR_HHARI"/>
    <property type="match status" value="1"/>
</dbReference>
<dbReference type="FunFam" id="1.20.120.1750:FF:000002">
    <property type="entry name" value="RBR-type E3 ubiquitin transferase"/>
    <property type="match status" value="1"/>
</dbReference>
<dbReference type="FunFam" id="3.30.40.10:FF:000019">
    <property type="entry name" value="RBR-type E3 ubiquitin transferase"/>
    <property type="match status" value="1"/>
</dbReference>
<dbReference type="Gene3D" id="1.20.120.1750">
    <property type="match status" value="1"/>
</dbReference>
<dbReference type="Gene3D" id="3.30.40.10">
    <property type="entry name" value="Zinc/RING finger domain, C3HC4 (zinc finger)"/>
    <property type="match status" value="1"/>
</dbReference>
<dbReference type="InterPro" id="IPR045840">
    <property type="entry name" value="Ariadne"/>
</dbReference>
<dbReference type="InterPro" id="IPR048962">
    <property type="entry name" value="ARIH1-like_UBL"/>
</dbReference>
<dbReference type="InterPro" id="IPR031127">
    <property type="entry name" value="E3_UB_ligase_RBR"/>
</dbReference>
<dbReference type="InterPro" id="IPR002867">
    <property type="entry name" value="IBR_dom"/>
</dbReference>
<dbReference type="InterPro" id="IPR044066">
    <property type="entry name" value="TRIAD_supradom"/>
</dbReference>
<dbReference type="InterPro" id="IPR018957">
    <property type="entry name" value="Znf_C3HC4_RING-type"/>
</dbReference>
<dbReference type="InterPro" id="IPR001841">
    <property type="entry name" value="Znf_RING"/>
</dbReference>
<dbReference type="InterPro" id="IPR013083">
    <property type="entry name" value="Znf_RING/FYVE/PHD"/>
</dbReference>
<dbReference type="PANTHER" id="PTHR11685">
    <property type="entry name" value="RBR FAMILY RING FINGER AND IBR DOMAIN-CONTAINING"/>
    <property type="match status" value="1"/>
</dbReference>
<dbReference type="Pfam" id="PF19422">
    <property type="entry name" value="Ariadne"/>
    <property type="match status" value="1"/>
</dbReference>
<dbReference type="Pfam" id="PF01485">
    <property type="entry name" value="IBR"/>
    <property type="match status" value="1"/>
</dbReference>
<dbReference type="Pfam" id="PF22191">
    <property type="entry name" value="IBR_1"/>
    <property type="match status" value="1"/>
</dbReference>
<dbReference type="Pfam" id="PF21235">
    <property type="entry name" value="UBA_ARI1"/>
    <property type="match status" value="1"/>
</dbReference>
<dbReference type="Pfam" id="PF00097">
    <property type="entry name" value="zf-C3HC4"/>
    <property type="match status" value="1"/>
</dbReference>
<dbReference type="SMART" id="SM00647">
    <property type="entry name" value="IBR"/>
    <property type="match status" value="2"/>
</dbReference>
<dbReference type="SUPFAM" id="SSF57850">
    <property type="entry name" value="RING/U-box"/>
    <property type="match status" value="3"/>
</dbReference>
<dbReference type="PROSITE" id="PS51873">
    <property type="entry name" value="TRIAD"/>
    <property type="match status" value="1"/>
</dbReference>
<dbReference type="PROSITE" id="PS50089">
    <property type="entry name" value="ZF_RING_2"/>
    <property type="match status" value="1"/>
</dbReference>
<feature type="chain" id="PRO_0000410898" description="E3 ubiquitin-protein ligase arih1">
    <location>
        <begin position="1"/>
        <end position="529"/>
    </location>
</feature>
<feature type="zinc finger region" description="RING-type 1" evidence="2">
    <location>
        <begin position="158"/>
        <end position="208"/>
    </location>
</feature>
<feature type="zinc finger region" description="IBR-type" evidence="2">
    <location>
        <begin position="228"/>
        <end position="289"/>
    </location>
</feature>
<feature type="zinc finger region" description="RING-type 2; atypical" evidence="2">
    <location>
        <begin position="316"/>
        <end position="347"/>
    </location>
</feature>
<feature type="region of interest" description="Disordered" evidence="3">
    <location>
        <begin position="1"/>
        <end position="30"/>
    </location>
</feature>
<feature type="region of interest" description="Disordered" evidence="3">
    <location>
        <begin position="49"/>
        <end position="68"/>
    </location>
</feature>
<feature type="region of interest" description="UBA-like" evidence="1">
    <location>
        <begin position="77"/>
        <end position="125"/>
    </location>
</feature>
<feature type="region of interest" description="TRIAD supradomain" evidence="2">
    <location>
        <begin position="154"/>
        <end position="365"/>
    </location>
</feature>
<feature type="region of interest" description="Ariadne domain" evidence="1">
    <location>
        <begin position="380"/>
        <end position="529"/>
    </location>
</feature>
<feature type="compositionally biased region" description="Gly residues" evidence="3">
    <location>
        <begin position="51"/>
        <end position="64"/>
    </location>
</feature>
<feature type="active site" evidence="2">
    <location>
        <position position="329"/>
    </location>
</feature>
<feature type="binding site" evidence="2">
    <location>
        <position position="158"/>
    </location>
    <ligand>
        <name>Zn(2+)</name>
        <dbReference type="ChEBI" id="CHEBI:29105"/>
        <label>1</label>
    </ligand>
</feature>
<feature type="binding site" evidence="2">
    <location>
        <position position="161"/>
    </location>
    <ligand>
        <name>Zn(2+)</name>
        <dbReference type="ChEBI" id="CHEBI:29105"/>
        <label>1</label>
    </ligand>
</feature>
<feature type="binding site" evidence="2">
    <location>
        <position position="175"/>
    </location>
    <ligand>
        <name>Zn(2+)</name>
        <dbReference type="ChEBI" id="CHEBI:29105"/>
        <label>2</label>
    </ligand>
</feature>
<feature type="binding site" evidence="2">
    <location>
        <position position="177"/>
    </location>
    <ligand>
        <name>Zn(2+)</name>
        <dbReference type="ChEBI" id="CHEBI:29105"/>
        <label>2</label>
    </ligand>
</feature>
<feature type="binding site" evidence="2">
    <location>
        <position position="180"/>
    </location>
    <ligand>
        <name>Zn(2+)</name>
        <dbReference type="ChEBI" id="CHEBI:29105"/>
        <label>1</label>
    </ligand>
</feature>
<feature type="binding site" evidence="2">
    <location>
        <position position="183"/>
    </location>
    <ligand>
        <name>Zn(2+)</name>
        <dbReference type="ChEBI" id="CHEBI:29105"/>
        <label>1</label>
    </ligand>
</feature>
<feature type="binding site" evidence="2">
    <location>
        <position position="203"/>
    </location>
    <ligand>
        <name>Zn(2+)</name>
        <dbReference type="ChEBI" id="CHEBI:29105"/>
        <label>2</label>
    </ligand>
</feature>
<feature type="binding site" evidence="2">
    <location>
        <position position="208"/>
    </location>
    <ligand>
        <name>Zn(2+)</name>
        <dbReference type="ChEBI" id="CHEBI:29105"/>
        <label>2</label>
    </ligand>
</feature>
<feature type="binding site" evidence="2">
    <location>
        <position position="248"/>
    </location>
    <ligand>
        <name>Zn(2+)</name>
        <dbReference type="ChEBI" id="CHEBI:29105"/>
        <label>3</label>
    </ligand>
</feature>
<feature type="binding site" evidence="2">
    <location>
        <position position="253"/>
    </location>
    <ligand>
        <name>Zn(2+)</name>
        <dbReference type="ChEBI" id="CHEBI:29105"/>
        <label>3</label>
    </ligand>
</feature>
<feature type="binding site" evidence="2">
    <location>
        <position position="269"/>
    </location>
    <ligand>
        <name>Zn(2+)</name>
        <dbReference type="ChEBI" id="CHEBI:29105"/>
        <label>3</label>
    </ligand>
</feature>
<feature type="binding site" evidence="2">
    <location>
        <position position="271"/>
    </location>
    <ligand>
        <name>Zn(2+)</name>
        <dbReference type="ChEBI" id="CHEBI:29105"/>
        <label>3</label>
    </ligand>
</feature>
<feature type="binding site" evidence="2">
    <location>
        <position position="276"/>
    </location>
    <ligand>
        <name>Zn(2+)</name>
        <dbReference type="ChEBI" id="CHEBI:29105"/>
        <label>4</label>
    </ligand>
</feature>
<feature type="binding site" evidence="2">
    <location>
        <position position="279"/>
    </location>
    <ligand>
        <name>Zn(2+)</name>
        <dbReference type="ChEBI" id="CHEBI:29105"/>
        <label>4</label>
    </ligand>
</feature>
<feature type="binding site" evidence="2">
    <location>
        <position position="284"/>
    </location>
    <ligand>
        <name>Zn(2+)</name>
        <dbReference type="ChEBI" id="CHEBI:29105"/>
        <label>4</label>
    </ligand>
</feature>
<feature type="binding site" evidence="2">
    <location>
        <position position="289"/>
    </location>
    <ligand>
        <name>Zn(2+)</name>
        <dbReference type="ChEBI" id="CHEBI:29105"/>
        <label>4</label>
    </ligand>
</feature>
<feature type="binding site" evidence="2">
    <location>
        <position position="316"/>
    </location>
    <ligand>
        <name>Zn(2+)</name>
        <dbReference type="ChEBI" id="CHEBI:29105"/>
        <label>5</label>
    </ligand>
</feature>
<feature type="binding site" evidence="2">
    <location>
        <position position="319"/>
    </location>
    <ligand>
        <name>Zn(2+)</name>
        <dbReference type="ChEBI" id="CHEBI:29105"/>
        <label>5</label>
    </ligand>
</feature>
<feature type="binding site" evidence="2">
    <location>
        <position position="334"/>
    </location>
    <ligand>
        <name>Zn(2+)</name>
        <dbReference type="ChEBI" id="CHEBI:29105"/>
        <label>5</label>
    </ligand>
</feature>
<feature type="binding site" evidence="2">
    <location>
        <position position="339"/>
    </location>
    <ligand>
        <name>Zn(2+)</name>
        <dbReference type="ChEBI" id="CHEBI:29105"/>
        <label>5</label>
    </ligand>
</feature>
<feature type="binding site" evidence="2">
    <location>
        <position position="344"/>
    </location>
    <ligand>
        <name>Zn(2+)</name>
        <dbReference type="ChEBI" id="CHEBI:29105"/>
        <label>6</label>
    </ligand>
</feature>
<feature type="binding site" evidence="2">
    <location>
        <position position="347"/>
    </location>
    <ligand>
        <name>Zn(2+)</name>
        <dbReference type="ChEBI" id="CHEBI:29105"/>
        <label>6</label>
    </ligand>
</feature>
<feature type="binding site" evidence="2">
    <location>
        <position position="354"/>
    </location>
    <ligand>
        <name>Zn(2+)</name>
        <dbReference type="ChEBI" id="CHEBI:29105"/>
        <label>6</label>
    </ligand>
</feature>
<feature type="binding site" evidence="2">
    <location>
        <position position="361"/>
    </location>
    <ligand>
        <name>Zn(2+)</name>
        <dbReference type="ChEBI" id="CHEBI:29105"/>
        <label>6</label>
    </ligand>
</feature>
<gene>
    <name type="primary">arih1</name>
</gene>
<reference key="1">
    <citation type="submission" date="2008-03" db="EMBL/GenBank/DDBJ databases">
        <authorList>
            <consortium name="NIH - Xenopus Gene Collection (XGC) project"/>
        </authorList>
    </citation>
    <scope>NUCLEOTIDE SEQUENCE [LARGE SCALE MRNA]</scope>
    <source>
        <strain>N6</strain>
        <tissue>Lung</tissue>
    </source>
</reference>
<sequence length="529" mass="61706">MDSDEGYNYEFDDEEECSEDSGADEHEDDLELGEVELVEAGLSGSERAGICGEGGGSALGPGPGGEEEEDYRYEVLTAEQILQHMVECIREVNEVIQNPATITRILLSHFNWDKEKLMERYFDGNLEKLFSECHVINPSKKSRTRQMNTRSSAQDMPCQICYLNYPNSYFTGLECGHKFCMQCWSEYLTTKIIEEGMGQTISCPAHGCDILVDDNTVMRLITDSKVKLKYQHLITNSFVECNRLLKWCPAPDCHHVVKVQYPDAKPVRCKCGRQFCFNCGENWHDPVKCKWLKKWIKKCDDDSETSNWIAANTKECPKCHVTIEKDGGCNHMVCRNQNCKAEFCWVCLGPWEPHGSAWYNCNRYNEDDAKAARDAQERSRAALQRYLFYCNRYMNHMQSLRFEHKLYAQVKQKMEEMQQHNMSWIEVQFLKKAVDVLCQCRSTLMYTYVFAFYLKKNNQSIIFENNQADLENATEVLSGYLERDISQDSLQDIKQKVQDKYRYCESRRRVLLLHVHEGYEKDLWEYIED</sequence>
<comment type="function">
    <text evidence="1">E3 ubiquitin-protein ligase, which catalyzes ubiquitination of target proteins together with ubiquitin-conjugating enzyme E2 ube2l3. Acts as an atypical E3 ubiquitin-protein ligase by working together with cullin-RING ubiquitin ligase (CRL) complexes and initiating ubiquitination of CRL substrates: associates with CRL complexes and specifically mediates addition of the first ubiquitin on CRLs targets. The initial ubiquitin is then elongated. E3 ubiquitin-protein ligase activity is activated upon binding to neddylated cullin-RING ubiquitin ligase complexes.</text>
</comment>
<comment type="catalytic activity">
    <reaction evidence="1">
        <text>[E2 ubiquitin-conjugating enzyme]-S-ubiquitinyl-L-cysteine + [acceptor protein]-L-lysine = [E2 ubiquitin-conjugating enzyme]-L-cysteine + [acceptor protein]-N(6)-ubiquitinyl-L-lysine.</text>
        <dbReference type="EC" id="2.3.2.31"/>
    </reaction>
</comment>
<comment type="activity regulation">
    <text evidence="1">Autoinhibited by the ariadne domain, which masks the second RING-type zinc finger that contains the active site and inhibits the E3 activity. Inhibition is relieved upon binding to neddylated cullin-RING ubiquitin ligase complexes, which activate the E3 ligase activity of ARIH1.</text>
</comment>
<comment type="pathway">
    <text>Protein modification; protein ubiquitination.</text>
</comment>
<comment type="subunit">
    <text evidence="1">Interacts (via the first RING-type zinc finger) with ube2l3. Associates with cullin-RING ubiquitin ligase (CRL) complexes containing neddylated cullin.</text>
</comment>
<comment type="subcellular location">
    <subcellularLocation>
        <location evidence="1">Cytoplasm</location>
    </subcellularLocation>
    <subcellularLocation>
        <location evidence="1">Nucleus</location>
    </subcellularLocation>
</comment>
<comment type="domain">
    <text evidence="1">Members of the RBR family are atypical E3 ligases. They interact with the E2 conjugating enzyme UBE2L3 and function like HECT-type E3 enzymes: they bind E2s via the first RING-type zinc finger, but require an obligate trans-thiolation step during the ubiquitin transfer, requiring a conserved active site Cys residue in the second RING-type zinc finger. The active site probably forms a thioester intermediate with ubiquitin taken from the active-site cysteine of the E2 before ultimately transferring it to a Lys residue on the substrate.</text>
</comment>
<comment type="domain">
    <text evidence="1">The Ariadne domain inhibits activity by masking the second RING-type zinc finger that contains the active site.</text>
</comment>
<comment type="similarity">
    <text evidence="4">Belongs to the RBR family. Ariadne subfamily.</text>
</comment>
<evidence type="ECO:0000250" key="1">
    <source>
        <dbReference type="UniProtKB" id="Q9Y4X5"/>
    </source>
</evidence>
<evidence type="ECO:0000255" key="2">
    <source>
        <dbReference type="PROSITE-ProRule" id="PRU01221"/>
    </source>
</evidence>
<evidence type="ECO:0000256" key="3">
    <source>
        <dbReference type="SAM" id="MobiDB-lite"/>
    </source>
</evidence>
<evidence type="ECO:0000305" key="4"/>